<comment type="similarity">
    <text evidence="1">Belongs to the UPF0342 family.</text>
</comment>
<feature type="chain" id="PRO_0000292754" description="UPF0342 protein STER_0693">
    <location>
        <begin position="1"/>
        <end position="112"/>
    </location>
</feature>
<organism>
    <name type="scientific">Streptococcus thermophilus (strain ATCC BAA-491 / LMD-9)</name>
    <dbReference type="NCBI Taxonomy" id="322159"/>
    <lineage>
        <taxon>Bacteria</taxon>
        <taxon>Bacillati</taxon>
        <taxon>Bacillota</taxon>
        <taxon>Bacilli</taxon>
        <taxon>Lactobacillales</taxon>
        <taxon>Streptococcaceae</taxon>
        <taxon>Streptococcus</taxon>
    </lineage>
</organism>
<sequence length="112" mass="12791">MRNIYDLANELERGIRALPEYKNLVEKKEAIATDAEASALFKEFTDFQEDFYAKMQAGTMPTAEEQAAVQELGQKVEANALLKEYLTAQQSLSVYLNDIERIIFKPLQELNN</sequence>
<gene>
    <name type="ordered locus">STER_0693</name>
</gene>
<accession>Q03LH1</accession>
<evidence type="ECO:0000255" key="1">
    <source>
        <dbReference type="HAMAP-Rule" id="MF_01526"/>
    </source>
</evidence>
<proteinExistence type="inferred from homology"/>
<dbReference type="EMBL" id="CP000419">
    <property type="protein sequence ID" value="ABJ65951.1"/>
    <property type="molecule type" value="Genomic_DNA"/>
</dbReference>
<dbReference type="RefSeq" id="WP_002947244.1">
    <property type="nucleotide sequence ID" value="NZ_CP086001.1"/>
</dbReference>
<dbReference type="SMR" id="Q03LH1"/>
<dbReference type="KEGG" id="ste:STER_0693"/>
<dbReference type="HOGENOM" id="CLU_140243_2_0_9"/>
<dbReference type="Gene3D" id="1.20.1500.10">
    <property type="entry name" value="YheA/YmcA-like"/>
    <property type="match status" value="1"/>
</dbReference>
<dbReference type="HAMAP" id="MF_01526">
    <property type="entry name" value="UPF0342"/>
    <property type="match status" value="1"/>
</dbReference>
<dbReference type="InterPro" id="IPR010368">
    <property type="entry name" value="Com_YlbF"/>
</dbReference>
<dbReference type="InterPro" id="IPR023378">
    <property type="entry name" value="YheA/YmcA-like_dom_sf"/>
</dbReference>
<dbReference type="NCBIfam" id="NF010209">
    <property type="entry name" value="PRK13676.1-1"/>
    <property type="match status" value="1"/>
</dbReference>
<dbReference type="Pfam" id="PF06133">
    <property type="entry name" value="Com_YlbF"/>
    <property type="match status" value="1"/>
</dbReference>
<dbReference type="SUPFAM" id="SSF158622">
    <property type="entry name" value="YheA/YmcA-like"/>
    <property type="match status" value="1"/>
</dbReference>
<name>Y693_STRTD</name>
<protein>
    <recommendedName>
        <fullName evidence="1">UPF0342 protein STER_0693</fullName>
    </recommendedName>
</protein>
<reference key="1">
    <citation type="journal article" date="2006" name="Proc. Natl. Acad. Sci. U.S.A.">
        <title>Comparative genomics of the lactic acid bacteria.</title>
        <authorList>
            <person name="Makarova K.S."/>
            <person name="Slesarev A."/>
            <person name="Wolf Y.I."/>
            <person name="Sorokin A."/>
            <person name="Mirkin B."/>
            <person name="Koonin E.V."/>
            <person name="Pavlov A."/>
            <person name="Pavlova N."/>
            <person name="Karamychev V."/>
            <person name="Polouchine N."/>
            <person name="Shakhova V."/>
            <person name="Grigoriev I."/>
            <person name="Lou Y."/>
            <person name="Rohksar D."/>
            <person name="Lucas S."/>
            <person name="Huang K."/>
            <person name="Goodstein D.M."/>
            <person name="Hawkins T."/>
            <person name="Plengvidhya V."/>
            <person name="Welker D."/>
            <person name="Hughes J."/>
            <person name="Goh Y."/>
            <person name="Benson A."/>
            <person name="Baldwin K."/>
            <person name="Lee J.-H."/>
            <person name="Diaz-Muniz I."/>
            <person name="Dosti B."/>
            <person name="Smeianov V."/>
            <person name="Wechter W."/>
            <person name="Barabote R."/>
            <person name="Lorca G."/>
            <person name="Altermann E."/>
            <person name="Barrangou R."/>
            <person name="Ganesan B."/>
            <person name="Xie Y."/>
            <person name="Rawsthorne H."/>
            <person name="Tamir D."/>
            <person name="Parker C."/>
            <person name="Breidt F."/>
            <person name="Broadbent J.R."/>
            <person name="Hutkins R."/>
            <person name="O'Sullivan D."/>
            <person name="Steele J."/>
            <person name="Unlu G."/>
            <person name="Saier M.H. Jr."/>
            <person name="Klaenhammer T."/>
            <person name="Richardson P."/>
            <person name="Kozyavkin S."/>
            <person name="Weimer B.C."/>
            <person name="Mills D.A."/>
        </authorList>
    </citation>
    <scope>NUCLEOTIDE SEQUENCE [LARGE SCALE GENOMIC DNA]</scope>
    <source>
        <strain>ATCC BAA-491 / LMD-9</strain>
    </source>
</reference>